<keyword id="KW-0004">4Fe-4S</keyword>
<keyword id="KW-0408">Iron</keyword>
<keyword id="KW-0411">Iron-sulfur</keyword>
<keyword id="KW-0414">Isoprene biosynthesis</keyword>
<keyword id="KW-0479">Metal-binding</keyword>
<keyword id="KW-0560">Oxidoreductase</keyword>
<proteinExistence type="inferred from homology"/>
<sequence length="367" mass="39626">MTHRTKTRPVKVGNLTIGGNNELIIQSMTTTKTHDVEATVAEIKRLEEAGCQVVRVAVPDERAANAIADIKKQINIPLVADIHFDYRLALKAIEGGIDKVRINPGNIGRRHKVEAVVNAAKERGIPIRIGVNAGSLERHILEKYGYPTADGMVESALHHIKILEDLDFHDIIVSMKASDVNLAIEAYEKAARAFDYPLHLGITESGTLFAGTVKSAAGLGAILSKGIGNTLRISLSADPVEEVKVARELLKSFGLASNAATLISCPTCGRIEIDLISIANEVEEYISTLQVPIKVAVLGCAVNGPGEAREADIGIAGARGEGLLFRKGQVVRKVPEEIMVEELKKEIDVIAAEMAAEREKEKETQEQ</sequence>
<gene>
    <name evidence="1" type="primary">ispG</name>
    <name type="synonym">gcpE</name>
    <name type="ordered locus">BCE_4358</name>
</gene>
<organism>
    <name type="scientific">Bacillus cereus (strain ATCC 10987 / NRS 248)</name>
    <dbReference type="NCBI Taxonomy" id="222523"/>
    <lineage>
        <taxon>Bacteria</taxon>
        <taxon>Bacillati</taxon>
        <taxon>Bacillota</taxon>
        <taxon>Bacilli</taxon>
        <taxon>Bacillales</taxon>
        <taxon>Bacillaceae</taxon>
        <taxon>Bacillus</taxon>
        <taxon>Bacillus cereus group</taxon>
    </lineage>
</organism>
<protein>
    <recommendedName>
        <fullName evidence="1">4-hydroxy-3-methylbut-2-en-1-yl diphosphate synthase (flavodoxin)</fullName>
        <ecNumber evidence="1">1.17.7.3</ecNumber>
    </recommendedName>
    <alternativeName>
        <fullName evidence="1">1-hydroxy-2-methyl-2-(E)-butenyl 4-diphosphate synthase</fullName>
    </alternativeName>
</protein>
<feature type="chain" id="PRO_0000190528" description="4-hydroxy-3-methylbut-2-en-1-yl diphosphate synthase (flavodoxin)">
    <location>
        <begin position="1"/>
        <end position="367"/>
    </location>
</feature>
<feature type="binding site" evidence="1">
    <location>
        <position position="265"/>
    </location>
    <ligand>
        <name>[4Fe-4S] cluster</name>
        <dbReference type="ChEBI" id="CHEBI:49883"/>
    </ligand>
</feature>
<feature type="binding site" evidence="1">
    <location>
        <position position="268"/>
    </location>
    <ligand>
        <name>[4Fe-4S] cluster</name>
        <dbReference type="ChEBI" id="CHEBI:49883"/>
    </ligand>
</feature>
<feature type="binding site" evidence="1">
    <location>
        <position position="300"/>
    </location>
    <ligand>
        <name>[4Fe-4S] cluster</name>
        <dbReference type="ChEBI" id="CHEBI:49883"/>
    </ligand>
</feature>
<feature type="binding site" evidence="1">
    <location>
        <position position="307"/>
    </location>
    <ligand>
        <name>[4Fe-4S] cluster</name>
        <dbReference type="ChEBI" id="CHEBI:49883"/>
    </ligand>
</feature>
<accession>Q730Q8</accession>
<comment type="function">
    <text evidence="1">Converts 2C-methyl-D-erythritol 2,4-cyclodiphosphate (ME-2,4cPP) into 1-hydroxy-2-methyl-2-(E)-butenyl 4-diphosphate.</text>
</comment>
<comment type="catalytic activity">
    <reaction evidence="1">
        <text>(2E)-4-hydroxy-3-methylbut-2-enyl diphosphate + oxidized [flavodoxin] + H2O + 2 H(+) = 2-C-methyl-D-erythritol 2,4-cyclic diphosphate + reduced [flavodoxin]</text>
        <dbReference type="Rhea" id="RHEA:43604"/>
        <dbReference type="Rhea" id="RHEA-COMP:10622"/>
        <dbReference type="Rhea" id="RHEA-COMP:10623"/>
        <dbReference type="ChEBI" id="CHEBI:15377"/>
        <dbReference type="ChEBI" id="CHEBI:15378"/>
        <dbReference type="ChEBI" id="CHEBI:57618"/>
        <dbReference type="ChEBI" id="CHEBI:58210"/>
        <dbReference type="ChEBI" id="CHEBI:58483"/>
        <dbReference type="ChEBI" id="CHEBI:128753"/>
        <dbReference type="EC" id="1.17.7.3"/>
    </reaction>
</comment>
<comment type="cofactor">
    <cofactor evidence="1">
        <name>[4Fe-4S] cluster</name>
        <dbReference type="ChEBI" id="CHEBI:49883"/>
    </cofactor>
    <text evidence="1">Binds 1 [4Fe-4S] cluster.</text>
</comment>
<comment type="pathway">
    <text evidence="1">Isoprenoid biosynthesis; isopentenyl diphosphate biosynthesis via DXP pathway; isopentenyl diphosphate from 1-deoxy-D-xylulose 5-phosphate: step 5/6.</text>
</comment>
<comment type="similarity">
    <text evidence="1">Belongs to the IspG family.</text>
</comment>
<dbReference type="EC" id="1.17.7.3" evidence="1"/>
<dbReference type="EMBL" id="AE017194">
    <property type="protein sequence ID" value="AAS43259.1"/>
    <property type="molecule type" value="Genomic_DNA"/>
</dbReference>
<dbReference type="SMR" id="Q730Q8"/>
<dbReference type="KEGG" id="bca:BCE_4358"/>
<dbReference type="HOGENOM" id="CLU_042258_0_0_9"/>
<dbReference type="UniPathway" id="UPA00056">
    <property type="reaction ID" value="UER00096"/>
</dbReference>
<dbReference type="Proteomes" id="UP000002527">
    <property type="component" value="Chromosome"/>
</dbReference>
<dbReference type="GO" id="GO:0051539">
    <property type="term" value="F:4 iron, 4 sulfur cluster binding"/>
    <property type="evidence" value="ECO:0007669"/>
    <property type="project" value="UniProtKB-UniRule"/>
</dbReference>
<dbReference type="GO" id="GO:0046429">
    <property type="term" value="F:4-hydroxy-3-methylbut-2-en-1-yl diphosphate synthase activity (ferredoxin)"/>
    <property type="evidence" value="ECO:0007669"/>
    <property type="project" value="UniProtKB-UniRule"/>
</dbReference>
<dbReference type="GO" id="GO:0141197">
    <property type="term" value="F:4-hydroxy-3-methylbut-2-enyl-diphosphate synthase activity (flavodoxin)"/>
    <property type="evidence" value="ECO:0007669"/>
    <property type="project" value="UniProtKB-EC"/>
</dbReference>
<dbReference type="GO" id="GO:0005506">
    <property type="term" value="F:iron ion binding"/>
    <property type="evidence" value="ECO:0007669"/>
    <property type="project" value="InterPro"/>
</dbReference>
<dbReference type="GO" id="GO:0019288">
    <property type="term" value="P:isopentenyl diphosphate biosynthetic process, methylerythritol 4-phosphate pathway"/>
    <property type="evidence" value="ECO:0007669"/>
    <property type="project" value="UniProtKB-UniRule"/>
</dbReference>
<dbReference type="GO" id="GO:0016114">
    <property type="term" value="P:terpenoid biosynthetic process"/>
    <property type="evidence" value="ECO:0007669"/>
    <property type="project" value="InterPro"/>
</dbReference>
<dbReference type="FunFam" id="3.20.20.20:FF:000001">
    <property type="entry name" value="4-hydroxy-3-methylbut-2-en-1-yl diphosphate synthase (flavodoxin)"/>
    <property type="match status" value="1"/>
</dbReference>
<dbReference type="FunFam" id="3.30.413.10:FF:000005">
    <property type="entry name" value="4-hydroxy-3-methylbut-2-en-1-yl diphosphate synthase (flavodoxin)"/>
    <property type="match status" value="1"/>
</dbReference>
<dbReference type="Gene3D" id="3.20.20.20">
    <property type="entry name" value="Dihydropteroate synthase-like"/>
    <property type="match status" value="1"/>
</dbReference>
<dbReference type="Gene3D" id="3.30.413.10">
    <property type="entry name" value="Sulfite Reductase Hemoprotein, domain 1"/>
    <property type="match status" value="1"/>
</dbReference>
<dbReference type="HAMAP" id="MF_00159">
    <property type="entry name" value="IspG"/>
    <property type="match status" value="1"/>
</dbReference>
<dbReference type="InterPro" id="IPR011005">
    <property type="entry name" value="Dihydropteroate_synth-like_sf"/>
</dbReference>
<dbReference type="InterPro" id="IPR016425">
    <property type="entry name" value="IspG_bac"/>
</dbReference>
<dbReference type="InterPro" id="IPR004588">
    <property type="entry name" value="IspG_bac-typ"/>
</dbReference>
<dbReference type="InterPro" id="IPR045854">
    <property type="entry name" value="NO2/SO3_Rdtase_4Fe4S_sf"/>
</dbReference>
<dbReference type="NCBIfam" id="TIGR00612">
    <property type="entry name" value="ispG_gcpE"/>
    <property type="match status" value="1"/>
</dbReference>
<dbReference type="NCBIfam" id="NF001540">
    <property type="entry name" value="PRK00366.1"/>
    <property type="match status" value="1"/>
</dbReference>
<dbReference type="PANTHER" id="PTHR30454">
    <property type="entry name" value="4-HYDROXY-3-METHYLBUT-2-EN-1-YL DIPHOSPHATE SYNTHASE"/>
    <property type="match status" value="1"/>
</dbReference>
<dbReference type="PANTHER" id="PTHR30454:SF0">
    <property type="entry name" value="4-HYDROXY-3-METHYLBUT-2-EN-1-YL DIPHOSPHATE SYNTHASE (FERREDOXIN), CHLOROPLASTIC"/>
    <property type="match status" value="1"/>
</dbReference>
<dbReference type="Pfam" id="PF04551">
    <property type="entry name" value="GcpE"/>
    <property type="match status" value="1"/>
</dbReference>
<dbReference type="PIRSF" id="PIRSF004640">
    <property type="entry name" value="IspG"/>
    <property type="match status" value="1"/>
</dbReference>
<dbReference type="SUPFAM" id="SSF51717">
    <property type="entry name" value="Dihydropteroate synthetase-like"/>
    <property type="match status" value="1"/>
</dbReference>
<dbReference type="SUPFAM" id="SSF56014">
    <property type="entry name" value="Nitrite and sulphite reductase 4Fe-4S domain-like"/>
    <property type="match status" value="1"/>
</dbReference>
<reference key="1">
    <citation type="journal article" date="2004" name="Nucleic Acids Res.">
        <title>The genome sequence of Bacillus cereus ATCC 10987 reveals metabolic adaptations and a large plasmid related to Bacillus anthracis pXO1.</title>
        <authorList>
            <person name="Rasko D.A."/>
            <person name="Ravel J."/>
            <person name="Oekstad O.A."/>
            <person name="Helgason E."/>
            <person name="Cer R.Z."/>
            <person name="Jiang L."/>
            <person name="Shores K.A."/>
            <person name="Fouts D.E."/>
            <person name="Tourasse N.J."/>
            <person name="Angiuoli S.V."/>
            <person name="Kolonay J.F."/>
            <person name="Nelson W.C."/>
            <person name="Kolstoe A.-B."/>
            <person name="Fraser C.M."/>
            <person name="Read T.D."/>
        </authorList>
    </citation>
    <scope>NUCLEOTIDE SEQUENCE [LARGE SCALE GENOMIC DNA]</scope>
    <source>
        <strain>ATCC 10987 / NRS 248</strain>
    </source>
</reference>
<name>ISPG_BACC1</name>
<evidence type="ECO:0000255" key="1">
    <source>
        <dbReference type="HAMAP-Rule" id="MF_00159"/>
    </source>
</evidence>